<dbReference type="EC" id="3.1.-.-" evidence="1 2 3"/>
<dbReference type="EMBL" id="AP008227">
    <property type="protein sequence ID" value="BAD71948.1"/>
    <property type="molecule type" value="Genomic_DNA"/>
</dbReference>
<dbReference type="RefSeq" id="WP_011229148.1">
    <property type="nucleotide sequence ID" value="NC_006462.1"/>
</dbReference>
<dbReference type="RefSeq" id="YP_145391.1">
    <property type="nucleotide sequence ID" value="NC_006462.1"/>
</dbReference>
<dbReference type="PDB" id="5FSH">
    <property type="method" value="X-ray"/>
    <property type="resolution" value="2.30 A"/>
    <property type="chains" value="A/B=1-464"/>
</dbReference>
<dbReference type="PDB" id="8JBB">
    <property type="method" value="X-ray"/>
    <property type="resolution" value="1.81 A"/>
    <property type="chains" value="A/B=1-464"/>
</dbReference>
<dbReference type="PDB" id="8JBC">
    <property type="method" value="X-ray"/>
    <property type="resolution" value="2.41 A"/>
    <property type="chains" value="A/B=1-464"/>
</dbReference>
<dbReference type="PDB" id="8JH1">
    <property type="method" value="X-ray"/>
    <property type="resolution" value="2.89 A"/>
    <property type="chains" value="A/B=2-464"/>
</dbReference>
<dbReference type="PDBsum" id="5FSH"/>
<dbReference type="PDBsum" id="8JBB"/>
<dbReference type="PDBsum" id="8JBC"/>
<dbReference type="PDBsum" id="8JH1"/>
<dbReference type="SMR" id="Q53W17"/>
<dbReference type="EnsemblBacteria" id="BAD71948">
    <property type="protein sequence ID" value="BAD71948"/>
    <property type="gene ID" value="BAD71948"/>
</dbReference>
<dbReference type="GeneID" id="3169219"/>
<dbReference type="KEGG" id="ttj:TTHB152"/>
<dbReference type="PATRIC" id="fig|300852.9.peg.2100"/>
<dbReference type="HOGENOM" id="CLU_589161_0_0_0"/>
<dbReference type="EvolutionaryTrace" id="Q53W17"/>
<dbReference type="Proteomes" id="UP000000532">
    <property type="component" value="Plasmid pTT27"/>
</dbReference>
<dbReference type="GO" id="GO:0004519">
    <property type="term" value="F:endonuclease activity"/>
    <property type="evidence" value="ECO:0007669"/>
    <property type="project" value="UniProtKB-KW"/>
</dbReference>
<dbReference type="GO" id="GO:0051607">
    <property type="term" value="P:defense response to virus"/>
    <property type="evidence" value="ECO:0007669"/>
    <property type="project" value="UniProtKB-KW"/>
</dbReference>
<dbReference type="Gene3D" id="3.40.50.10770">
    <property type="entry name" value="Hypothetical protein VC1899 like domain (Restriction endonuclease-like)"/>
    <property type="match status" value="1"/>
</dbReference>
<dbReference type="InterPro" id="IPR054008">
    <property type="entry name" value="Csm6_6H"/>
</dbReference>
<dbReference type="Pfam" id="PF09670">
    <property type="entry name" value="Cas_Cas02710"/>
    <property type="match status" value="1"/>
</dbReference>
<dbReference type="Pfam" id="PF22205">
    <property type="entry name" value="Csm6_6H"/>
    <property type="match status" value="1"/>
</dbReference>
<protein>
    <recommendedName>
        <fullName>CRISPR system endoribonuclease Csm6</fullName>
        <ecNumber evidence="1 2 3">3.1.-.-</ecNumber>
    </recommendedName>
    <alternativeName>
        <fullName evidence="5">CRISPR type III-A associated protein Csm6</fullName>
    </alternativeName>
    <alternativeName>
        <fullName evidence="4">TtCsm6</fullName>
    </alternativeName>
</protein>
<comment type="function">
    <text evidence="5">CRISPR (clustered regularly interspaced short palindromic repeat) is an adaptive immune system that provides protection against mobile genetic elements (viruses, transposable elements and conjugative plasmids). CRISPR clusters contain spacers, sequences complementary to antecedent mobile elements, and target invading nucleic acids. CRISPR clusters are transcribed and processed into CRISPR RNA (crRNA) (Probable). The type III-A Csm effector complex binds crRNA and acts as a crRNA-guided RNase, DNase and cyclic oligoadenylate synthase; binding of target RNA cognate to the crRNA is required for all activities. This protein is not part of the Csm effector complex (Probable).</text>
</comment>
<comment type="function">
    <text evidence="1 2 3">A single-strand-specific endoribonuclease (ssRNase) producing free 5'-OH (PubMed:26763118). Activity is approximately 1000-fold stimulated by cyclic oligoadenylate (cOA); only cyclic tetraadenylate (cA4) stimulates the ssRNase activity while linear oligoadenylates do not activate the RNase (PubMed:28663439). Another study showed stimulation by linear tetraadenylate at very high concentrations, but did not examine stimulation by cA4 (PubMed:28722012).</text>
</comment>
<comment type="cofactor">
    <text evidence="1">Does not require a metal cofactor.</text>
</comment>
<comment type="activity regulation">
    <text evidence="2 7">Non-specific ssRNase activity is allosterically activated about 1000-fold by cyclic tetraadenylate (cA4), which probably binds to its CARF domain.</text>
</comment>
<comment type="subunit">
    <text evidence="1">Homodimer. The protein forms a twisted, head-to-head dimer; the composite ssRNase active site is formed at the dimer interface.</text>
</comment>
<comment type="domain">
    <text evidence="1">The N-terminal CRISPR-associated Rossman fold (CARF) probably binds the cA4 effector. ssRNase activity resides in the C-terminal HEPN domain.</text>
</comment>
<comment type="miscellaneous">
    <text evidence="5">Probably encoded in a type III-A CRISPR locus.</text>
</comment>
<comment type="similarity">
    <text evidence="5">Belongs to the CRISPR-associated Csm6 family.</text>
</comment>
<gene>
    <name evidence="4" type="primary">csm6</name>
    <name type="ordered locus">TTHB152</name>
</gene>
<geneLocation type="plasmid">
    <name>pTT27</name>
</geneLocation>
<accession>Q53W17</accession>
<sequence>MEDLDALWERYREAVRAGGNPQALYQEMVWPALLALWREKPRVYPFPQAFAVSVHTLGTSPEATALAILGAGAERVYVLHTPESARFLPRLRQDTGKDLYPVEIGKSDVEAIYREVKRLLEKHPEVPVALDLTSGTKAMSAGLAAAGFFFQRFYPKVRVVYVDNEDYDPELRRPRAGTEKLRILPNPHEALAEVDALFAKELYGKGEFGQAAAYFRGMVGRTGNQAYALYALLAEMYRAWRALDFGEALKAGRKLLGQLSQNVWLNHPLNARREALEAQVALLEAVDRFLKARDFALKEGVYGLARTLLHLAQEAKEEAAVLAALYAYRALELLLQERLALLGRRAEAPGLSPEEAEALRKALAELLGVLPEEVRLPAKLGLLDLLAFLRLKGDEALGRLSLAELRGLAGALKGRNSALLVHGFDVPSPKAVEGIARLAQGLLQDLEARTALGPLSPEPVPLGF</sequence>
<organism>
    <name type="scientific">Thermus thermophilus (strain ATCC 27634 / DSM 579 / HB8)</name>
    <dbReference type="NCBI Taxonomy" id="300852"/>
    <lineage>
        <taxon>Bacteria</taxon>
        <taxon>Thermotogati</taxon>
        <taxon>Deinococcota</taxon>
        <taxon>Deinococci</taxon>
        <taxon>Thermales</taxon>
        <taxon>Thermaceae</taxon>
        <taxon>Thermus</taxon>
    </lineage>
</organism>
<proteinExistence type="evidence at protein level"/>
<evidence type="ECO:0000269" key="1">
    <source>
    </source>
</evidence>
<evidence type="ECO:0000269" key="2">
    <source>
    </source>
</evidence>
<evidence type="ECO:0000269" key="3">
    <source>
    </source>
</evidence>
<evidence type="ECO:0000303" key="4">
    <source>
    </source>
</evidence>
<evidence type="ECO:0000305" key="5"/>
<evidence type="ECO:0000305" key="6">
    <source>
    </source>
</evidence>
<evidence type="ECO:0000305" key="7">
    <source>
    </source>
</evidence>
<evidence type="ECO:0007744" key="8">
    <source>
        <dbReference type="PDB" id="5FSH"/>
    </source>
</evidence>
<evidence type="ECO:0007829" key="9">
    <source>
        <dbReference type="PDB" id="5FSH"/>
    </source>
</evidence>
<evidence type="ECO:0007829" key="10">
    <source>
        <dbReference type="PDB" id="8JBB"/>
    </source>
</evidence>
<feature type="chain" id="PRO_0000446128" description="CRISPR system endoribonuclease Csm6">
    <location>
        <begin position="1"/>
        <end position="464"/>
    </location>
</feature>
<feature type="region of interest" description="CARF domain" evidence="6">
    <location>
        <begin position="1"/>
        <end position="190"/>
    </location>
</feature>
<feature type="region of interest" description="HEPN domain" evidence="6">
    <location>
        <begin position="191"/>
        <end position="464"/>
    </location>
</feature>
<feature type="mutagenesis site" description="Wild-type ssRNase activity." evidence="1">
    <location>
        <begin position="1"/>
        <end position="190"/>
    </location>
</feature>
<feature type="mutagenesis site" description="Wild-type ssRNase activity." evidence="1">
    <original>T</original>
    <variation>A</variation>
    <location>
        <position position="133"/>
    </location>
</feature>
<feature type="mutagenesis site" description="Wild-type ssRNase activity." evidence="1">
    <original>K</original>
    <variation>A</variation>
    <location>
        <position position="137"/>
    </location>
</feature>
<feature type="mutagenesis site" description="No ssRNase activity." evidence="1">
    <original>E</original>
    <variation>A</variation>
    <location>
        <position position="332"/>
    </location>
</feature>
<feature type="mutagenesis site" description="No ssRNase activity." evidence="1">
    <original>R</original>
    <variation>A</variation>
    <location>
        <position position="415"/>
    </location>
</feature>
<feature type="mutagenesis site" description="No ssRNase activity." evidence="1">
    <original>N</original>
    <variation>A</variation>
    <location>
        <position position="416"/>
    </location>
</feature>
<feature type="mutagenesis site" description="No ssRNase activity." evidence="1">
    <original>H</original>
    <variation>A</variation>
    <location>
        <position position="422"/>
    </location>
</feature>
<feature type="helix" evidence="10">
    <location>
        <begin position="4"/>
        <end position="16"/>
    </location>
</feature>
<feature type="helix" evidence="10">
    <location>
        <begin position="21"/>
        <end position="28"/>
    </location>
</feature>
<feature type="helix" evidence="10">
    <location>
        <begin position="30"/>
        <end position="39"/>
    </location>
</feature>
<feature type="strand" evidence="9">
    <location>
        <begin position="43"/>
        <end position="46"/>
    </location>
</feature>
<feature type="strand" evidence="10">
    <location>
        <begin position="51"/>
        <end position="57"/>
    </location>
</feature>
<feature type="helix" evidence="10">
    <location>
        <begin position="61"/>
        <end position="71"/>
    </location>
</feature>
<feature type="strand" evidence="10">
    <location>
        <begin position="74"/>
        <end position="80"/>
    </location>
</feature>
<feature type="turn" evidence="10">
    <location>
        <begin position="82"/>
        <end position="84"/>
    </location>
</feature>
<feature type="helix" evidence="10">
    <location>
        <begin position="85"/>
        <end position="87"/>
    </location>
</feature>
<feature type="helix" evidence="10">
    <location>
        <begin position="88"/>
        <end position="95"/>
    </location>
</feature>
<feature type="strand" evidence="10">
    <location>
        <begin position="99"/>
        <end position="103"/>
    </location>
</feature>
<feature type="helix" evidence="10">
    <location>
        <begin position="109"/>
        <end position="122"/>
    </location>
</feature>
<feature type="strand" evidence="10">
    <location>
        <begin position="128"/>
        <end position="131"/>
    </location>
</feature>
<feature type="strand" evidence="10">
    <location>
        <begin position="133"/>
        <end position="135"/>
    </location>
</feature>
<feature type="helix" evidence="10">
    <location>
        <begin position="137"/>
        <end position="150"/>
    </location>
</feature>
<feature type="turn" evidence="10">
    <location>
        <begin position="151"/>
        <end position="153"/>
    </location>
</feature>
<feature type="strand" evidence="10">
    <location>
        <begin position="157"/>
        <end position="163"/>
    </location>
</feature>
<feature type="turn" evidence="10">
    <location>
        <begin position="169"/>
        <end position="172"/>
    </location>
</feature>
<feature type="helix" evidence="9">
    <location>
        <begin position="176"/>
        <end position="178"/>
    </location>
</feature>
<feature type="strand" evidence="10">
    <location>
        <begin position="180"/>
        <end position="184"/>
    </location>
</feature>
<feature type="helix" evidence="10">
    <location>
        <begin position="187"/>
        <end position="190"/>
    </location>
</feature>
<feature type="helix" evidence="10">
    <location>
        <begin position="194"/>
        <end position="204"/>
    </location>
</feature>
<feature type="helix" evidence="10">
    <location>
        <begin position="208"/>
        <end position="221"/>
    </location>
</feature>
<feature type="helix" evidence="10">
    <location>
        <begin position="226"/>
        <end position="241"/>
    </location>
</feature>
<feature type="helix" evidence="10">
    <location>
        <begin position="245"/>
        <end position="259"/>
    </location>
</feature>
<feature type="helix" evidence="10">
    <location>
        <begin position="262"/>
        <end position="264"/>
    </location>
</feature>
<feature type="helix" evidence="10">
    <location>
        <begin position="268"/>
        <end position="272"/>
    </location>
</feature>
<feature type="helix" evidence="10">
    <location>
        <begin position="273"/>
        <end position="292"/>
    </location>
</feature>
<feature type="helix" evidence="10">
    <location>
        <begin position="298"/>
        <end position="315"/>
    </location>
</feature>
<feature type="turn" evidence="10">
    <location>
        <begin position="316"/>
        <end position="318"/>
    </location>
</feature>
<feature type="helix" evidence="10">
    <location>
        <begin position="320"/>
        <end position="341"/>
    </location>
</feature>
<feature type="strand" evidence="10">
    <location>
        <begin position="346"/>
        <end position="348"/>
    </location>
</feature>
<feature type="helix" evidence="10">
    <location>
        <begin position="353"/>
        <end position="367"/>
    </location>
</feature>
<feature type="helix" evidence="10">
    <location>
        <begin position="371"/>
        <end position="373"/>
    </location>
</feature>
<feature type="helix" evidence="10">
    <location>
        <begin position="382"/>
        <end position="391"/>
    </location>
</feature>
<feature type="helix" evidence="10">
    <location>
        <begin position="395"/>
        <end position="398"/>
    </location>
</feature>
<feature type="helix" evidence="10">
    <location>
        <begin position="402"/>
        <end position="413"/>
    </location>
</feature>
<feature type="turn" evidence="10">
    <location>
        <begin position="414"/>
        <end position="417"/>
    </location>
</feature>
<feature type="turn" evidence="10">
    <location>
        <begin position="419"/>
        <end position="422"/>
    </location>
</feature>
<feature type="helix" evidence="10">
    <location>
        <begin position="429"/>
        <end position="447"/>
    </location>
</feature>
<feature type="strand" evidence="10">
    <location>
        <begin position="450"/>
        <end position="452"/>
    </location>
</feature>
<reference key="1">
    <citation type="submission" date="2004-11" db="EMBL/GenBank/DDBJ databases">
        <title>Complete genome sequence of Thermus thermophilus HB8.</title>
        <authorList>
            <person name="Masui R."/>
            <person name="Kurokawa K."/>
            <person name="Nakagawa N."/>
            <person name="Tokunaga F."/>
            <person name="Koyama Y."/>
            <person name="Shibata T."/>
            <person name="Oshima T."/>
            <person name="Yokoyama S."/>
            <person name="Yasunaga T."/>
            <person name="Kuramitsu S."/>
        </authorList>
    </citation>
    <scope>NUCLEOTIDE SEQUENCE [LARGE SCALE GENOMIC DNA]</scope>
    <source>
        <strain>ATCC 27634 / DSM 579 / HB8</strain>
        <plasmid>pTT27</plasmid>
    </source>
</reference>
<reference key="2">
    <citation type="journal article" date="2017" name="Science">
        <title>A cyclic oligonucleotide signaling pathway in type III CRISPR-Cas systems.</title>
        <authorList>
            <person name="Kazlauskiene M."/>
            <person name="Kostiuk G."/>
            <person name="Venclovas C."/>
            <person name="Tamulaitis G."/>
            <person name="Siksnys V."/>
        </authorList>
    </citation>
    <scope>FUNCTION</scope>
    <scope>ACTIVITY REGULATION</scope>
    <source>
        <strain>ATCC 27634 / DSM 579 / HB8</strain>
    </source>
</reference>
<reference key="3">
    <citation type="journal article" date="2017" name="Nature">
        <title>Type III CRISPR-Cas systems produce cyclic oligoadenylate second messengers.</title>
        <authorList>
            <person name="Niewoehner O."/>
            <person name="Garcia-Doval C."/>
            <person name="Rostoel J.T."/>
            <person name="Berk C."/>
            <person name="Schwede F."/>
            <person name="Bigler L."/>
            <person name="Hall J."/>
            <person name="Marraffini L.A."/>
            <person name="Jinek M."/>
        </authorList>
    </citation>
    <scope>FUNCTION</scope>
    <scope>ACTIVITY REGULATION</scope>
    <source>
        <strain>ATCC 27634 / DSM 579 / HB8</strain>
    </source>
</reference>
<reference evidence="8" key="4">
    <citation type="journal article" date="2016" name="RNA">
        <title>Structural basis for the endoribonuclease activity of the type III-A CRISPR-associated protein Csm6.</title>
        <authorList>
            <person name="Niewoehner O."/>
            <person name="Jinek M."/>
        </authorList>
    </citation>
    <scope>X-RAY CRYSTALLOGRAPHY (2.30 ANGSTROMS)</scope>
    <scope>FUNCTION</scope>
    <scope>COFACTOR</scope>
    <scope>SUBUNIT</scope>
    <scope>DOMAIN</scope>
    <scope>MUTAGENESIS OF 1-MET--ALA-190; THR-133; LYS-137; GLU-332; ARG-415; ASN-416 AND HIS-422</scope>
    <source>
        <strain>ATCC 27634 / DSM 579 / HB8</strain>
        <plasmid>pTT27</plasmid>
    </source>
</reference>
<keyword id="KW-0002">3D-structure</keyword>
<keyword id="KW-0051">Antiviral defense</keyword>
<keyword id="KW-0255">Endonuclease</keyword>
<keyword id="KW-0378">Hydrolase</keyword>
<keyword id="KW-0540">Nuclease</keyword>
<keyword id="KW-0614">Plasmid</keyword>
<keyword id="KW-1185">Reference proteome</keyword>
<name>CSM6_THET8</name>